<sequence length="527" mass="58394">MHDKILILDFGSQVTQLIARRIREAHVLSEIHPHDVSDEFIRDFKPTGIILSGGPNSVTETDTPRAPQAVFEAGVPVLGICYGMQTMAEQLGGKVDSGHLREFGYAEVRARNHTSFLDGIQDFATPEGHGMLKVWMSHGDKVLEMPQGFQLMASTESCPIAAMADETRHFYGVQWHPEVTHTVQGRAMLERFVLKICGAKPDWEMGNYIDEAVENIRKQVGDEHVILGLSGGVDSSVAAALLHRAIGDQLTCVFVDHGLLRLNEAEQVMSMFADNLGVKVIHVDASEAFMSKLKGVTDPEAKRKIIGAEFVEVFQTEAGKLTDAKWLAQGTIYPDVIESAGKGKKAAHTIKSHHNVGGLPETLNLKLLEPLRELFKDEVRELGVKLGLPPSMVYRHPFPGPGLGVRILGEVKREYADLLRRADAIFIESLRTFIDKDTDKSWYDLTSQAFAVFLPVKSVGVMGDGRTYEYVVALRAVQTLDFMTAHWAHLPHDLLGHVSNRIINEVRGINRVVYDISGKPPATIEWE</sequence>
<keyword id="KW-0067">ATP-binding</keyword>
<keyword id="KW-0315">Glutamine amidotransferase</keyword>
<keyword id="KW-0332">GMP biosynthesis</keyword>
<keyword id="KW-0436">Ligase</keyword>
<keyword id="KW-0547">Nucleotide-binding</keyword>
<keyword id="KW-0658">Purine biosynthesis</keyword>
<keyword id="KW-1185">Reference proteome</keyword>
<dbReference type="EC" id="6.3.5.2" evidence="1"/>
<dbReference type="EMBL" id="CP001043">
    <property type="protein sequence ID" value="ACC70494.1"/>
    <property type="molecule type" value="Genomic_DNA"/>
</dbReference>
<dbReference type="RefSeq" id="WP_012400708.1">
    <property type="nucleotide sequence ID" value="NC_010622.1"/>
</dbReference>
<dbReference type="SMR" id="B2JIA0"/>
<dbReference type="STRING" id="391038.Bphy_1312"/>
<dbReference type="KEGG" id="bph:Bphy_1312"/>
<dbReference type="eggNOG" id="COG0518">
    <property type="taxonomic scope" value="Bacteria"/>
</dbReference>
<dbReference type="eggNOG" id="COG0519">
    <property type="taxonomic scope" value="Bacteria"/>
</dbReference>
<dbReference type="HOGENOM" id="CLU_014340_0_5_4"/>
<dbReference type="OrthoDB" id="9802219at2"/>
<dbReference type="UniPathway" id="UPA00189">
    <property type="reaction ID" value="UER00296"/>
</dbReference>
<dbReference type="Proteomes" id="UP000001192">
    <property type="component" value="Chromosome 1"/>
</dbReference>
<dbReference type="GO" id="GO:0005829">
    <property type="term" value="C:cytosol"/>
    <property type="evidence" value="ECO:0007669"/>
    <property type="project" value="TreeGrafter"/>
</dbReference>
<dbReference type="GO" id="GO:0005524">
    <property type="term" value="F:ATP binding"/>
    <property type="evidence" value="ECO:0007669"/>
    <property type="project" value="UniProtKB-UniRule"/>
</dbReference>
<dbReference type="GO" id="GO:0003921">
    <property type="term" value="F:GMP synthase activity"/>
    <property type="evidence" value="ECO:0007669"/>
    <property type="project" value="InterPro"/>
</dbReference>
<dbReference type="CDD" id="cd01742">
    <property type="entry name" value="GATase1_GMP_Synthase"/>
    <property type="match status" value="1"/>
</dbReference>
<dbReference type="CDD" id="cd01997">
    <property type="entry name" value="GMP_synthase_C"/>
    <property type="match status" value="1"/>
</dbReference>
<dbReference type="FunFam" id="3.30.300.10:FF:000002">
    <property type="entry name" value="GMP synthase [glutamine-hydrolyzing]"/>
    <property type="match status" value="1"/>
</dbReference>
<dbReference type="FunFam" id="3.40.50.620:FF:000001">
    <property type="entry name" value="GMP synthase [glutamine-hydrolyzing]"/>
    <property type="match status" value="1"/>
</dbReference>
<dbReference type="FunFam" id="3.40.50.880:FF:000001">
    <property type="entry name" value="GMP synthase [glutamine-hydrolyzing]"/>
    <property type="match status" value="1"/>
</dbReference>
<dbReference type="Gene3D" id="3.30.300.10">
    <property type="match status" value="1"/>
</dbReference>
<dbReference type="Gene3D" id="3.40.50.880">
    <property type="match status" value="1"/>
</dbReference>
<dbReference type="Gene3D" id="3.40.50.620">
    <property type="entry name" value="HUPs"/>
    <property type="match status" value="1"/>
</dbReference>
<dbReference type="HAMAP" id="MF_00344">
    <property type="entry name" value="GMP_synthase"/>
    <property type="match status" value="1"/>
</dbReference>
<dbReference type="InterPro" id="IPR029062">
    <property type="entry name" value="Class_I_gatase-like"/>
</dbReference>
<dbReference type="InterPro" id="IPR017926">
    <property type="entry name" value="GATASE"/>
</dbReference>
<dbReference type="InterPro" id="IPR001674">
    <property type="entry name" value="GMP_synth_C"/>
</dbReference>
<dbReference type="InterPro" id="IPR004739">
    <property type="entry name" value="GMP_synth_GATase"/>
</dbReference>
<dbReference type="InterPro" id="IPR022955">
    <property type="entry name" value="GMP_synthase"/>
</dbReference>
<dbReference type="InterPro" id="IPR025777">
    <property type="entry name" value="GMPS_ATP_PPase_dom"/>
</dbReference>
<dbReference type="InterPro" id="IPR022310">
    <property type="entry name" value="NAD/GMP_synthase"/>
</dbReference>
<dbReference type="InterPro" id="IPR014729">
    <property type="entry name" value="Rossmann-like_a/b/a_fold"/>
</dbReference>
<dbReference type="NCBIfam" id="TIGR00884">
    <property type="entry name" value="guaA_Cterm"/>
    <property type="match status" value="1"/>
</dbReference>
<dbReference type="NCBIfam" id="TIGR00888">
    <property type="entry name" value="guaA_Nterm"/>
    <property type="match status" value="1"/>
</dbReference>
<dbReference type="NCBIfam" id="NF000848">
    <property type="entry name" value="PRK00074.1"/>
    <property type="match status" value="1"/>
</dbReference>
<dbReference type="PANTHER" id="PTHR11922:SF2">
    <property type="entry name" value="GMP SYNTHASE [GLUTAMINE-HYDROLYZING]"/>
    <property type="match status" value="1"/>
</dbReference>
<dbReference type="PANTHER" id="PTHR11922">
    <property type="entry name" value="GMP SYNTHASE-RELATED"/>
    <property type="match status" value="1"/>
</dbReference>
<dbReference type="Pfam" id="PF00117">
    <property type="entry name" value="GATase"/>
    <property type="match status" value="1"/>
</dbReference>
<dbReference type="Pfam" id="PF00958">
    <property type="entry name" value="GMP_synt_C"/>
    <property type="match status" value="1"/>
</dbReference>
<dbReference type="Pfam" id="PF02540">
    <property type="entry name" value="NAD_synthase"/>
    <property type="match status" value="1"/>
</dbReference>
<dbReference type="PRINTS" id="PR00097">
    <property type="entry name" value="ANTSNTHASEII"/>
</dbReference>
<dbReference type="PRINTS" id="PR00099">
    <property type="entry name" value="CPSGATASE"/>
</dbReference>
<dbReference type="PRINTS" id="PR00096">
    <property type="entry name" value="GATASE"/>
</dbReference>
<dbReference type="SUPFAM" id="SSF52402">
    <property type="entry name" value="Adenine nucleotide alpha hydrolases-like"/>
    <property type="match status" value="1"/>
</dbReference>
<dbReference type="SUPFAM" id="SSF52317">
    <property type="entry name" value="Class I glutamine amidotransferase-like"/>
    <property type="match status" value="1"/>
</dbReference>
<dbReference type="SUPFAM" id="SSF54810">
    <property type="entry name" value="GMP synthetase C-terminal dimerisation domain"/>
    <property type="match status" value="1"/>
</dbReference>
<dbReference type="PROSITE" id="PS51273">
    <property type="entry name" value="GATASE_TYPE_1"/>
    <property type="match status" value="1"/>
</dbReference>
<dbReference type="PROSITE" id="PS51553">
    <property type="entry name" value="GMPS_ATP_PPASE"/>
    <property type="match status" value="1"/>
</dbReference>
<protein>
    <recommendedName>
        <fullName evidence="1">GMP synthase [glutamine-hydrolyzing]</fullName>
        <ecNumber evidence="1">6.3.5.2</ecNumber>
    </recommendedName>
    <alternativeName>
        <fullName evidence="1">GMP synthetase</fullName>
    </alternativeName>
    <alternativeName>
        <fullName evidence="1">Glutamine amidotransferase</fullName>
    </alternativeName>
</protein>
<accession>B2JIA0</accession>
<reference key="1">
    <citation type="journal article" date="2014" name="Stand. Genomic Sci.">
        <title>Complete genome sequence of Burkholderia phymatum STM815(T), a broad host range and efficient nitrogen-fixing symbiont of Mimosa species.</title>
        <authorList>
            <person name="Moulin L."/>
            <person name="Klonowska A."/>
            <person name="Caroline B."/>
            <person name="Booth K."/>
            <person name="Vriezen J.A."/>
            <person name="Melkonian R."/>
            <person name="James E.K."/>
            <person name="Young J.P."/>
            <person name="Bena G."/>
            <person name="Hauser L."/>
            <person name="Land M."/>
            <person name="Kyrpides N."/>
            <person name="Bruce D."/>
            <person name="Chain P."/>
            <person name="Copeland A."/>
            <person name="Pitluck S."/>
            <person name="Woyke T."/>
            <person name="Lizotte-Waniewski M."/>
            <person name="Bristow J."/>
            <person name="Riley M."/>
        </authorList>
    </citation>
    <scope>NUCLEOTIDE SEQUENCE [LARGE SCALE GENOMIC DNA]</scope>
    <source>
        <strain>DSM 17167 / CIP 108236 / LMG 21445 / STM815</strain>
    </source>
</reference>
<gene>
    <name evidence="1" type="primary">guaA</name>
    <name type="ordered locus">Bphy_1312</name>
</gene>
<comment type="function">
    <text evidence="1">Catalyzes the synthesis of GMP from XMP.</text>
</comment>
<comment type="catalytic activity">
    <reaction evidence="1">
        <text>XMP + L-glutamine + ATP + H2O = GMP + L-glutamate + AMP + diphosphate + 2 H(+)</text>
        <dbReference type="Rhea" id="RHEA:11680"/>
        <dbReference type="ChEBI" id="CHEBI:15377"/>
        <dbReference type="ChEBI" id="CHEBI:15378"/>
        <dbReference type="ChEBI" id="CHEBI:29985"/>
        <dbReference type="ChEBI" id="CHEBI:30616"/>
        <dbReference type="ChEBI" id="CHEBI:33019"/>
        <dbReference type="ChEBI" id="CHEBI:57464"/>
        <dbReference type="ChEBI" id="CHEBI:58115"/>
        <dbReference type="ChEBI" id="CHEBI:58359"/>
        <dbReference type="ChEBI" id="CHEBI:456215"/>
        <dbReference type="EC" id="6.3.5.2"/>
    </reaction>
</comment>
<comment type="pathway">
    <text evidence="1">Purine metabolism; GMP biosynthesis; GMP from XMP (L-Gln route): step 1/1.</text>
</comment>
<comment type="subunit">
    <text evidence="1">Homodimer.</text>
</comment>
<evidence type="ECO:0000255" key="1">
    <source>
        <dbReference type="HAMAP-Rule" id="MF_00344"/>
    </source>
</evidence>
<proteinExistence type="inferred from homology"/>
<name>GUAA_PARP8</name>
<feature type="chain" id="PRO_1000120241" description="GMP synthase [glutamine-hydrolyzing]">
    <location>
        <begin position="1"/>
        <end position="527"/>
    </location>
</feature>
<feature type="domain" description="Glutamine amidotransferase type-1" evidence="1">
    <location>
        <begin position="4"/>
        <end position="202"/>
    </location>
</feature>
<feature type="domain" description="GMPS ATP-PPase" evidence="1">
    <location>
        <begin position="203"/>
        <end position="395"/>
    </location>
</feature>
<feature type="active site" description="Nucleophile" evidence="1">
    <location>
        <position position="81"/>
    </location>
</feature>
<feature type="active site" evidence="1">
    <location>
        <position position="176"/>
    </location>
</feature>
<feature type="active site" evidence="1">
    <location>
        <position position="178"/>
    </location>
</feature>
<feature type="binding site" evidence="1">
    <location>
        <begin position="230"/>
        <end position="236"/>
    </location>
    <ligand>
        <name>ATP</name>
        <dbReference type="ChEBI" id="CHEBI:30616"/>
    </ligand>
</feature>
<organism>
    <name type="scientific">Paraburkholderia phymatum (strain DSM 17167 / CIP 108236 / LMG 21445 / STM815)</name>
    <name type="common">Burkholderia phymatum</name>
    <dbReference type="NCBI Taxonomy" id="391038"/>
    <lineage>
        <taxon>Bacteria</taxon>
        <taxon>Pseudomonadati</taxon>
        <taxon>Pseudomonadota</taxon>
        <taxon>Betaproteobacteria</taxon>
        <taxon>Burkholderiales</taxon>
        <taxon>Burkholderiaceae</taxon>
        <taxon>Paraburkholderia</taxon>
    </lineage>
</organism>